<name>CP2J4_RAT</name>
<protein>
    <recommendedName>
        <fullName>Cytochrome P450 2J4</fullName>
        <ecNumber evidence="3">1.14.14.1</ecNumber>
    </recommendedName>
    <alternativeName>
        <fullName>CYPIIJ4</fullName>
    </alternativeName>
</protein>
<feature type="chain" id="PRO_0000451769" description="Cytochrome P450 2J4">
    <location>
        <begin position="1"/>
        <end position="501"/>
    </location>
</feature>
<feature type="transmembrane region" description="Helical" evidence="2">
    <location>
        <begin position="12"/>
        <end position="32"/>
    </location>
</feature>
<feature type="transmembrane region" description="Helical" evidence="2">
    <location>
        <begin position="77"/>
        <end position="97"/>
    </location>
</feature>
<feature type="binding site" description="axial binding residue" evidence="1">
    <location>
        <position position="447"/>
    </location>
    <ligand>
        <name>heme</name>
        <dbReference type="ChEBI" id="CHEBI:30413"/>
    </ligand>
    <ligandPart>
        <name>Fe</name>
        <dbReference type="ChEBI" id="CHEBI:18248"/>
    </ligandPart>
</feature>
<organism>
    <name type="scientific">Rattus norvegicus</name>
    <name type="common">Rat</name>
    <dbReference type="NCBI Taxonomy" id="10116"/>
    <lineage>
        <taxon>Eukaryota</taxon>
        <taxon>Metazoa</taxon>
        <taxon>Chordata</taxon>
        <taxon>Craniata</taxon>
        <taxon>Vertebrata</taxon>
        <taxon>Euteleostomi</taxon>
        <taxon>Mammalia</taxon>
        <taxon>Eutheria</taxon>
        <taxon>Euarchontoglires</taxon>
        <taxon>Glires</taxon>
        <taxon>Rodentia</taxon>
        <taxon>Myomorpha</taxon>
        <taxon>Muroidea</taxon>
        <taxon>Muridae</taxon>
        <taxon>Murinae</taxon>
        <taxon>Rattus</taxon>
    </lineage>
</organism>
<sequence>MLATAGSLIATIWAALHLRTLLVAALTFLLLADYFKTRRPKNYPPGPWGLPFVGNIFQLDFGQPHLSIQPFVKKYGNIFSLNLGDITSVVITGLPLIKETFTHIEQNILNRPLSVMQERITNKNGLIFSSGQTWKEQRRFALMTLRNFGLGKKSLEQRMQEEAHYLVEAIREEKGKPFNPHFSINNAVSNIICSVTFGERFEYHDSRFQEMLRLLDEVMYLETTMISQLYNIFPWIMKYIPGSHQTVFRNWEKLKLFVSSMIDDHRKDWNPEEPRDFIDAFLKEMSKYPEKTTSFNEENLICSTLDLFFAGTETTSTTLRWALLYMALYPEVQEKVQAEIDRVIGQKRAASLADRESMPYTNAVIHEVQRMGNIIPLNVPREVAMDTTLNGFHLPKGTMVLTNLTALHRDPKEWATPDVFNPEHFLENGQFKKRESFLPFSMGKRACLGEQLARSELFIFFTSLMQKFTFKPPTNEKLSLKFRNGLTLSPVTHRICAVPRE</sequence>
<comment type="function">
    <text evidence="3 4">A cytochrome P450 monooxygenase that may play a major role in intestinal retinoid metabolism. Catalyzes the oxidative transformation of all-trans retinal and 9-cis-retinal to the corresponding active forms all-trans and 9-cis retinoic acids (PubMed:9606960). Catalyzes the hydroxylation of carbon-hydrogen bonds. Hydroxylates arachidonic acid predominantly at the omega-1 position (PubMed:9143331). Mechanistically, uses molecular oxygen inserting one oxygen atom into a substrate, and reducing the second into a water molecule, with two electrons provided by NADPH via cytochrome P450 reductase (CPR; NADPH--hemoprotein reductase) (PubMed:9143331, PubMed:9606960).</text>
</comment>
<comment type="catalytic activity">
    <reaction evidence="3">
        <text>an organic molecule + reduced [NADPH--hemoprotein reductase] + O2 = an alcohol + oxidized [NADPH--hemoprotein reductase] + H2O + H(+)</text>
        <dbReference type="Rhea" id="RHEA:17149"/>
        <dbReference type="Rhea" id="RHEA-COMP:11964"/>
        <dbReference type="Rhea" id="RHEA-COMP:11965"/>
        <dbReference type="ChEBI" id="CHEBI:15377"/>
        <dbReference type="ChEBI" id="CHEBI:15378"/>
        <dbReference type="ChEBI" id="CHEBI:15379"/>
        <dbReference type="ChEBI" id="CHEBI:30879"/>
        <dbReference type="ChEBI" id="CHEBI:57618"/>
        <dbReference type="ChEBI" id="CHEBI:58210"/>
        <dbReference type="ChEBI" id="CHEBI:142491"/>
        <dbReference type="EC" id="1.14.14.1"/>
    </reaction>
    <physiologicalReaction direction="left-to-right" evidence="7">
        <dbReference type="Rhea" id="RHEA:17150"/>
    </physiologicalReaction>
</comment>
<comment type="catalytic activity">
    <reaction evidence="3">
        <text>(5Z,8Z,11Z,14Z)-eicosatetraenoate + reduced [NADPH--hemoprotein reductase] + O2 = 19-hydroxy-(5Z,8Z,11Z,14Z)-eicosatetraenoate + oxidized [NADPH--hemoprotein reductase] + H2O + H(+)</text>
        <dbReference type="Rhea" id="RHEA:39759"/>
        <dbReference type="Rhea" id="RHEA-COMP:11964"/>
        <dbReference type="Rhea" id="RHEA-COMP:11965"/>
        <dbReference type="ChEBI" id="CHEBI:15377"/>
        <dbReference type="ChEBI" id="CHEBI:15378"/>
        <dbReference type="ChEBI" id="CHEBI:15379"/>
        <dbReference type="ChEBI" id="CHEBI:32395"/>
        <dbReference type="ChEBI" id="CHEBI:57618"/>
        <dbReference type="ChEBI" id="CHEBI:58210"/>
        <dbReference type="ChEBI" id="CHEBI:76627"/>
    </reaction>
    <physiologicalReaction direction="left-to-right" evidence="7">
        <dbReference type="Rhea" id="RHEA:39760"/>
    </physiologicalReaction>
</comment>
<comment type="catalytic activity">
    <reaction evidence="4">
        <text>all-trans-retinal + reduced [NADPH--hemoprotein reductase] + O2 = all-trans-retinoate + oxidized [NADPH--hemoprotein reductase] + H2O + 2 H(+)</text>
        <dbReference type="Rhea" id="RHEA:42088"/>
        <dbReference type="Rhea" id="RHEA-COMP:11964"/>
        <dbReference type="Rhea" id="RHEA-COMP:11965"/>
        <dbReference type="ChEBI" id="CHEBI:15377"/>
        <dbReference type="ChEBI" id="CHEBI:15378"/>
        <dbReference type="ChEBI" id="CHEBI:15379"/>
        <dbReference type="ChEBI" id="CHEBI:17898"/>
        <dbReference type="ChEBI" id="CHEBI:35291"/>
        <dbReference type="ChEBI" id="CHEBI:57618"/>
        <dbReference type="ChEBI" id="CHEBI:58210"/>
    </reaction>
    <physiologicalReaction direction="left-to-right" evidence="8">
        <dbReference type="Rhea" id="RHEA:42089"/>
    </physiologicalReaction>
</comment>
<comment type="catalytic activity">
    <reaction evidence="4">
        <text>9-cis-retinal + reduced [NADPH--hemoprotein reductase] + O2 = 9-cis-retinoate + oxidized [NADPH--hemoprotein reductase] + H2O + 2 H(+)</text>
        <dbReference type="Rhea" id="RHEA:65524"/>
        <dbReference type="Rhea" id="RHEA-COMP:11964"/>
        <dbReference type="Rhea" id="RHEA-COMP:11965"/>
        <dbReference type="ChEBI" id="CHEBI:15377"/>
        <dbReference type="ChEBI" id="CHEBI:15378"/>
        <dbReference type="ChEBI" id="CHEBI:15379"/>
        <dbReference type="ChEBI" id="CHEBI:57618"/>
        <dbReference type="ChEBI" id="CHEBI:58210"/>
        <dbReference type="ChEBI" id="CHEBI:78273"/>
        <dbReference type="ChEBI" id="CHEBI:78630"/>
    </reaction>
    <physiologicalReaction direction="left-to-right" evidence="8">
        <dbReference type="Rhea" id="RHEA:65525"/>
    </physiologicalReaction>
</comment>
<comment type="cofactor">
    <cofactor evidence="1">
        <name>heme</name>
        <dbReference type="ChEBI" id="CHEBI:30413"/>
    </cofactor>
</comment>
<comment type="biophysicochemical properties">
    <kinetics>
        <KM evidence="4">49 uM for 9-cis-retinal</KM>
        <KM evidence="4">54 uM for all-trans-retinal</KM>
        <Vmax evidence="4">21.0 nmol/min/nmol enzyme toward 9-cis-retinal</Vmax>
        <Vmax evidence="4">20.0 nmol/min/nmol enzyme toward all-trans-retinal</Vmax>
    </kinetics>
</comment>
<comment type="pathway">
    <text evidence="7">Lipid metabolism; arachidonate metabolism.</text>
</comment>
<comment type="pathway">
    <text evidence="8">Cofactor metabolism; retinol metabolism.</text>
</comment>
<comment type="subcellular location">
    <subcellularLocation>
        <location evidence="3 4">Endoplasmic reticulum membrane</location>
        <topology evidence="2">Multi-pass membrane protein</topology>
    </subcellularLocation>
    <subcellularLocation>
        <location evidence="3 4">Microsome membrane</location>
        <topology evidence="2">Multi-pass membrane protein</topology>
    </subcellularLocation>
</comment>
<comment type="tissue specificity">
    <text evidence="3 4">Expressed in small intestinal enterocytes (at protein level) (PubMed:9143331). In the intestinal crypt, expressed at higher levels in the mature villous cells than in undifferentiated crypt cells (at protein level) (PubMed:9143331, PubMed:9606960). Expressed in liver, kidney, lung, and olfactory mucosa (at protein level) (PubMed:9143331).</text>
</comment>
<comment type="similarity">
    <text evidence="6">Belongs to the cytochrome P450 family.</text>
</comment>
<proteinExistence type="evidence at protein level"/>
<reference key="1">
    <citation type="journal article" date="1997" name="Arch. Biochem. Biophys.">
        <title>CDNA cloning, heterologous expression, and characterization of rat intestinal CYP2J4.</title>
        <authorList>
            <person name="Zhang Q.Y."/>
            <person name="Ding X."/>
            <person name="Kaminsky L.S."/>
        </authorList>
    </citation>
    <scope>NUCLEOTIDE SEQUENCE [MRNA]</scope>
    <scope>FUNCTION</scope>
    <scope>CATALYTIC ACTIVITY</scope>
    <scope>PATHWAY</scope>
    <scope>SUBCELLULAR LOCATION</scope>
    <scope>TISSUE SPECIFICITY</scope>
    <source>
        <tissue>Intestinal mucosa</tissue>
    </source>
</reference>
<reference key="2">
    <citation type="journal article" date="1998" name="Arch. Biochem. Biophys.">
        <title>Characterization of the cytochrome P450 CYP2J4: expression in rat small intestine and role in retinoic acid biotransformation from retinal.</title>
        <authorList>
            <person name="Zhang Q.Y."/>
            <person name="Raner G."/>
            <person name="Ding X."/>
            <person name="Dunbar D."/>
            <person name="Coon M.J."/>
            <person name="Kaminsky L.S."/>
        </authorList>
    </citation>
    <scope>FUNCTION</scope>
    <scope>CATALYTIC ACTIVITY</scope>
    <scope>BIOPHYSICOCHEMICAL PROPERTIES</scope>
    <scope>PATHWAY</scope>
    <scope>SUBCELLULAR LOCATION</scope>
    <scope>TISSUE SPECIFICITY</scope>
</reference>
<accession>Q9QXF7</accession>
<evidence type="ECO:0000250" key="1">
    <source>
        <dbReference type="UniProtKB" id="P33261"/>
    </source>
</evidence>
<evidence type="ECO:0000255" key="2"/>
<evidence type="ECO:0000269" key="3">
    <source>
    </source>
</evidence>
<evidence type="ECO:0000269" key="4">
    <source>
    </source>
</evidence>
<evidence type="ECO:0000303" key="5">
    <source>
    </source>
</evidence>
<evidence type="ECO:0000305" key="6"/>
<evidence type="ECO:0000305" key="7">
    <source>
    </source>
</evidence>
<evidence type="ECO:0000305" key="8">
    <source>
    </source>
</evidence>
<gene>
    <name evidence="5" type="primary">CYP2J4</name>
</gene>
<dbReference type="EC" id="1.14.14.1" evidence="3"/>
<dbReference type="EMBL" id="L81170">
    <property type="protein sequence ID" value="AAF21133.1"/>
    <property type="molecule type" value="mRNA"/>
</dbReference>
<dbReference type="SMR" id="Q9QXF7"/>
<dbReference type="FunCoup" id="Q9QXF7">
    <property type="interactions" value="141"/>
</dbReference>
<dbReference type="SwissLipids" id="SLP:000001680"/>
<dbReference type="UCSC" id="RGD:620007">
    <property type="organism name" value="rat"/>
</dbReference>
<dbReference type="AGR" id="RGD:620007"/>
<dbReference type="InParanoid" id="Q9QXF7"/>
<dbReference type="PhylomeDB" id="Q9QXF7"/>
<dbReference type="UniPathway" id="UPA00383"/>
<dbReference type="UniPathway" id="UPA00912"/>
<dbReference type="Proteomes" id="UP000002494">
    <property type="component" value="Unplaced"/>
</dbReference>
<dbReference type="GO" id="GO:0005737">
    <property type="term" value="C:cytoplasm"/>
    <property type="evidence" value="ECO:0000318"/>
    <property type="project" value="GO_Central"/>
</dbReference>
<dbReference type="GO" id="GO:0005789">
    <property type="term" value="C:endoplasmic reticulum membrane"/>
    <property type="evidence" value="ECO:0000314"/>
    <property type="project" value="UniProtKB"/>
</dbReference>
<dbReference type="GO" id="GO:0043231">
    <property type="term" value="C:intracellular membrane-bounded organelle"/>
    <property type="evidence" value="ECO:0000318"/>
    <property type="project" value="GO_Central"/>
</dbReference>
<dbReference type="GO" id="GO:0008391">
    <property type="term" value="F:arachidonate monooxygenase activity"/>
    <property type="evidence" value="ECO:0000314"/>
    <property type="project" value="UniProtKB"/>
</dbReference>
<dbReference type="GO" id="GO:0020037">
    <property type="term" value="F:heme binding"/>
    <property type="evidence" value="ECO:0000318"/>
    <property type="project" value="GO_Central"/>
</dbReference>
<dbReference type="GO" id="GO:0005506">
    <property type="term" value="F:iron ion binding"/>
    <property type="evidence" value="ECO:0007669"/>
    <property type="project" value="InterPro"/>
</dbReference>
<dbReference type="GO" id="GO:0016712">
    <property type="term" value="F:oxidoreductase activity, acting on paired donors, with incorporation or reduction of molecular oxygen, reduced flavin or flavoprotein as one donor, and incorporation of one atom of oxygen"/>
    <property type="evidence" value="ECO:0000318"/>
    <property type="project" value="GO_Central"/>
</dbReference>
<dbReference type="GO" id="GO:0019369">
    <property type="term" value="P:arachidonate metabolic process"/>
    <property type="evidence" value="ECO:0007669"/>
    <property type="project" value="UniProtKB-UniPathway"/>
</dbReference>
<dbReference type="GO" id="GO:0006082">
    <property type="term" value="P:organic acid metabolic process"/>
    <property type="evidence" value="ECO:0000318"/>
    <property type="project" value="GO_Central"/>
</dbReference>
<dbReference type="GO" id="GO:0042572">
    <property type="term" value="P:retinol metabolic process"/>
    <property type="evidence" value="ECO:0007669"/>
    <property type="project" value="UniProtKB-UniPathway"/>
</dbReference>
<dbReference type="GO" id="GO:0006805">
    <property type="term" value="P:xenobiotic metabolic process"/>
    <property type="evidence" value="ECO:0000318"/>
    <property type="project" value="GO_Central"/>
</dbReference>
<dbReference type="CDD" id="cd20662">
    <property type="entry name" value="CYP2J"/>
    <property type="match status" value="1"/>
</dbReference>
<dbReference type="FunFam" id="1.10.630.10:FF:000004">
    <property type="entry name" value="cytochrome P450 2D15 isoform X1"/>
    <property type="match status" value="1"/>
</dbReference>
<dbReference type="Gene3D" id="1.10.630.10">
    <property type="entry name" value="Cytochrome P450"/>
    <property type="match status" value="1"/>
</dbReference>
<dbReference type="InterPro" id="IPR001128">
    <property type="entry name" value="Cyt_P450"/>
</dbReference>
<dbReference type="InterPro" id="IPR017972">
    <property type="entry name" value="Cyt_P450_CS"/>
</dbReference>
<dbReference type="InterPro" id="IPR002401">
    <property type="entry name" value="Cyt_P450_E_grp-I"/>
</dbReference>
<dbReference type="InterPro" id="IPR008071">
    <property type="entry name" value="Cyt_P450_E_grp-I_CYP2J-like"/>
</dbReference>
<dbReference type="InterPro" id="IPR036396">
    <property type="entry name" value="Cyt_P450_sf"/>
</dbReference>
<dbReference type="InterPro" id="IPR050182">
    <property type="entry name" value="Cytochrome_P450_fam2"/>
</dbReference>
<dbReference type="PANTHER" id="PTHR24300:SF177">
    <property type="entry name" value="CYTOCHROME P450 2J2"/>
    <property type="match status" value="1"/>
</dbReference>
<dbReference type="PANTHER" id="PTHR24300">
    <property type="entry name" value="CYTOCHROME P450 508A4-RELATED"/>
    <property type="match status" value="1"/>
</dbReference>
<dbReference type="Pfam" id="PF00067">
    <property type="entry name" value="p450"/>
    <property type="match status" value="1"/>
</dbReference>
<dbReference type="PRINTS" id="PR00463">
    <property type="entry name" value="EP450I"/>
</dbReference>
<dbReference type="PRINTS" id="PR01688">
    <property type="entry name" value="EP450ICYP2J"/>
</dbReference>
<dbReference type="PRINTS" id="PR00385">
    <property type="entry name" value="P450"/>
</dbReference>
<dbReference type="SUPFAM" id="SSF48264">
    <property type="entry name" value="Cytochrome P450"/>
    <property type="match status" value="1"/>
</dbReference>
<dbReference type="PROSITE" id="PS00086">
    <property type="entry name" value="CYTOCHROME_P450"/>
    <property type="match status" value="1"/>
</dbReference>
<keyword id="KW-0256">Endoplasmic reticulum</keyword>
<keyword id="KW-0349">Heme</keyword>
<keyword id="KW-0408">Iron</keyword>
<keyword id="KW-0443">Lipid metabolism</keyword>
<keyword id="KW-0472">Membrane</keyword>
<keyword id="KW-0479">Metal-binding</keyword>
<keyword id="KW-0492">Microsome</keyword>
<keyword id="KW-0503">Monooxygenase</keyword>
<keyword id="KW-0560">Oxidoreductase</keyword>
<keyword id="KW-1185">Reference proteome</keyword>
<keyword id="KW-0812">Transmembrane</keyword>
<keyword id="KW-1133">Transmembrane helix</keyword>